<reference key="1">
    <citation type="journal article" date="2008" name="PLoS Genet.">
        <title>Genomic islands in the pathogenic filamentous fungus Aspergillus fumigatus.</title>
        <authorList>
            <person name="Fedorova N.D."/>
            <person name="Khaldi N."/>
            <person name="Joardar V.S."/>
            <person name="Maiti R."/>
            <person name="Amedeo P."/>
            <person name="Anderson M.J."/>
            <person name="Crabtree J."/>
            <person name="Silva J.C."/>
            <person name="Badger J.H."/>
            <person name="Albarraq A."/>
            <person name="Angiuoli S."/>
            <person name="Bussey H."/>
            <person name="Bowyer P."/>
            <person name="Cotty P.J."/>
            <person name="Dyer P.S."/>
            <person name="Egan A."/>
            <person name="Galens K."/>
            <person name="Fraser-Liggett C.M."/>
            <person name="Haas B.J."/>
            <person name="Inman J.M."/>
            <person name="Kent R."/>
            <person name="Lemieux S."/>
            <person name="Malavazi I."/>
            <person name="Orvis J."/>
            <person name="Roemer T."/>
            <person name="Ronning C.M."/>
            <person name="Sundaram J.P."/>
            <person name="Sutton G."/>
            <person name="Turner G."/>
            <person name="Venter J.C."/>
            <person name="White O.R."/>
            <person name="Whitty B.R."/>
            <person name="Youngman P."/>
            <person name="Wolfe K.H."/>
            <person name="Goldman G.H."/>
            <person name="Wortman J.R."/>
            <person name="Jiang B."/>
            <person name="Denning D.W."/>
            <person name="Nierman W.C."/>
        </authorList>
    </citation>
    <scope>NUCLEOTIDE SEQUENCE [LARGE SCALE GENOMIC DNA]</scope>
    <source>
        <strain>ATCC 1020 / DSM 3700 / CBS 544.65 / FGSC A1164 / JCM 1740 / NRRL 181 / WB 181</strain>
    </source>
</reference>
<keyword id="KW-0119">Carbohydrate metabolism</keyword>
<keyword id="KW-0136">Cellulose degradation</keyword>
<keyword id="KW-0325">Glycoprotein</keyword>
<keyword id="KW-0326">Glycosidase</keyword>
<keyword id="KW-0378">Hydrolase</keyword>
<keyword id="KW-0624">Polysaccharide degradation</keyword>
<keyword id="KW-1185">Reference proteome</keyword>
<keyword id="KW-0964">Secreted</keyword>
<keyword id="KW-0732">Signal</keyword>
<feature type="signal peptide" evidence="2">
    <location>
        <begin position="1"/>
        <end position="19"/>
    </location>
</feature>
<feature type="chain" id="PRO_0000394115" description="Probable beta-glucosidase F">
    <location>
        <begin position="20"/>
        <end position="869"/>
    </location>
</feature>
<feature type="region of interest" description="Disordered" evidence="3">
    <location>
        <begin position="678"/>
        <end position="698"/>
    </location>
</feature>
<feature type="compositionally biased region" description="Pro residues" evidence="3">
    <location>
        <begin position="681"/>
        <end position="691"/>
    </location>
</feature>
<feature type="active site" evidence="1">
    <location>
        <position position="289"/>
    </location>
</feature>
<feature type="glycosylation site" description="N-linked (GlcNAc...) asparagine" evidence="2">
    <location>
        <position position="69"/>
    </location>
</feature>
<feature type="glycosylation site" description="N-linked (GlcNAc...) asparagine" evidence="2">
    <location>
        <position position="77"/>
    </location>
</feature>
<feature type="glycosylation site" description="N-linked (GlcNAc...) asparagine" evidence="2">
    <location>
        <position position="261"/>
    </location>
</feature>
<feature type="glycosylation site" description="N-linked (GlcNAc...) asparagine" evidence="2">
    <location>
        <position position="332"/>
    </location>
</feature>
<feature type="glycosylation site" description="N-linked (GlcNAc...) asparagine" evidence="2">
    <location>
        <position position="364"/>
    </location>
</feature>
<feature type="glycosylation site" description="N-linked (GlcNAc...) asparagine" evidence="2">
    <location>
        <position position="399"/>
    </location>
</feature>
<feature type="glycosylation site" description="N-linked (GlcNAc...) asparagine" evidence="2">
    <location>
        <position position="425"/>
    </location>
</feature>
<feature type="glycosylation site" description="N-linked (GlcNAc...) asparagine" evidence="2">
    <location>
        <position position="478"/>
    </location>
</feature>
<feature type="glycosylation site" description="N-linked (GlcNAc...) asparagine" evidence="2">
    <location>
        <position position="728"/>
    </location>
</feature>
<protein>
    <recommendedName>
        <fullName>Probable beta-glucosidase F</fullName>
        <ecNumber>3.2.1.21</ecNumber>
    </recommendedName>
    <alternativeName>
        <fullName>Beta-D-glucoside glucohydrolase F</fullName>
    </alternativeName>
    <alternativeName>
        <fullName>Cellobiase F</fullName>
    </alternativeName>
    <alternativeName>
        <fullName>Gentiobiase F</fullName>
    </alternativeName>
</protein>
<name>BGLF_NEOFI</name>
<organism>
    <name type="scientific">Neosartorya fischeri (strain ATCC 1020 / DSM 3700 / CBS 544.65 / FGSC A1164 / JCM 1740 / NRRL 181 / WB 181)</name>
    <name type="common">Aspergillus fischerianus</name>
    <dbReference type="NCBI Taxonomy" id="331117"/>
    <lineage>
        <taxon>Eukaryota</taxon>
        <taxon>Fungi</taxon>
        <taxon>Dikarya</taxon>
        <taxon>Ascomycota</taxon>
        <taxon>Pezizomycotina</taxon>
        <taxon>Eurotiomycetes</taxon>
        <taxon>Eurotiomycetidae</taxon>
        <taxon>Eurotiales</taxon>
        <taxon>Aspergillaceae</taxon>
        <taxon>Aspergillus</taxon>
        <taxon>Aspergillus subgen. Fumigati</taxon>
    </lineage>
</organism>
<accession>A1DMR8</accession>
<evidence type="ECO:0000250" key="1"/>
<evidence type="ECO:0000255" key="2"/>
<evidence type="ECO:0000256" key="3">
    <source>
        <dbReference type="SAM" id="MobiDB-lite"/>
    </source>
</evidence>
<evidence type="ECO:0000305" key="4"/>
<comment type="function">
    <text evidence="1">Beta-glucosidases are one of a number of cellulolytic enzymes involved in the degradation of cellulosic biomass. Catalyzes the last step releasing glucose from the inhibitory cellobiose (By similarity).</text>
</comment>
<comment type="catalytic activity">
    <reaction>
        <text>Hydrolysis of terminal, non-reducing beta-D-glucosyl residues with release of beta-D-glucose.</text>
        <dbReference type="EC" id="3.2.1.21"/>
    </reaction>
</comment>
<comment type="pathway">
    <text>Glycan metabolism; cellulose degradation.</text>
</comment>
<comment type="subcellular location">
    <subcellularLocation>
        <location evidence="1">Secreted</location>
    </subcellularLocation>
</comment>
<comment type="similarity">
    <text evidence="4">Belongs to the glycosyl hydrolase 3 family.</text>
</comment>
<sequence>MRVLSAIALVASLVPSALSAPASESRVSTQLQSRDAAGYSSPPYYPAPNGGWLSSWADAYEKAQRVVRNMTLAEKVNLTTGTGIFMGPCVGQTGSALRFGIPNLCLQDSPLGVRNSDHNTAFPAGITVGATFDKDLMYARGVELGEEFRGKGINVFLGPSVGPIGRKPRGGRNWEGFGADPSLQAIGGAQTIKGIQSRGVIATIKHYIGNEQEMYRMSNIGQRAYSSNIDDRTLHELYLWPFAEGIRAGVGAVMTAYNEVNSSACSQNSKLLNEILKDELGFQGFVMTDWLGQYGGVSSALAGLDMAMPGDGAIPLLGNAYWGSELSHSILNGSVPVSRLNDMVTRIVATWYKMGQDGDFPLPNFSSNTQDATGPLYPGALFSPSGVVNQYVNVQADHNITARAIARDAITLLKNDDNILPLKRNDSLKVFGTDAGPNPDGLNSCADMGCNKGVLTMGWGSGTSRLPYLVTPQEAIANISSNAAFFITDNFPSNVAVSSGDVAVVFISADSGENYITVEGNPGDRTSAGLNAWHNGDKLVKDAAAKFSKVVVVVHTVGPILMEEWIDLPSVKAVLVAHLPGQEAGWSLTDVLFGDYSPSGHLPYTIPRAESDYPSSVGLLSQPIVQIQDTHTEGLYIDYRHFLKSSITPRYPFGHGLSYTTFSFSQPTLSVRTALDSAYPPTRPPKGPTPTYPTTIPNPSEVAWPKNFDRIWRYLYPYLDDPAGAAKNSSKTYPYPAGYTTVPKPAPRAGGAEGGNPALFDVAFAVSVTVTNTGTRPGRAVAQLYVELPDSLGETPSRQLRQFAKTKTLAPGASETLTMEFTRKDISVWDVVVQDWKAPVRGEGVKIWLGESVLDMRAVCEVGGACRVI</sequence>
<dbReference type="EC" id="3.2.1.21"/>
<dbReference type="EMBL" id="DS027698">
    <property type="protein sequence ID" value="EAW16089.1"/>
    <property type="molecule type" value="Genomic_DNA"/>
</dbReference>
<dbReference type="RefSeq" id="XP_001257986.1">
    <property type="nucleotide sequence ID" value="XM_001257985.1"/>
</dbReference>
<dbReference type="SMR" id="A1DMR8"/>
<dbReference type="STRING" id="331117.A1DMR8"/>
<dbReference type="GlyCosmos" id="A1DMR8">
    <property type="glycosylation" value="9 sites, No reported glycans"/>
</dbReference>
<dbReference type="EnsemblFungi" id="EAW16089">
    <property type="protein sequence ID" value="EAW16089"/>
    <property type="gene ID" value="NFIA_054350"/>
</dbReference>
<dbReference type="GeneID" id="4584501"/>
<dbReference type="KEGG" id="nfi:NFIA_054350"/>
<dbReference type="VEuPathDB" id="FungiDB:NFIA_054350"/>
<dbReference type="eggNOG" id="ENOG502QR4D">
    <property type="taxonomic scope" value="Eukaryota"/>
</dbReference>
<dbReference type="HOGENOM" id="CLU_004542_2_0_1"/>
<dbReference type="OMA" id="PAPYGGW"/>
<dbReference type="OrthoDB" id="416222at2759"/>
<dbReference type="UniPathway" id="UPA00696"/>
<dbReference type="Proteomes" id="UP000006702">
    <property type="component" value="Unassembled WGS sequence"/>
</dbReference>
<dbReference type="GO" id="GO:0005576">
    <property type="term" value="C:extracellular region"/>
    <property type="evidence" value="ECO:0007669"/>
    <property type="project" value="UniProtKB-SubCell"/>
</dbReference>
<dbReference type="GO" id="GO:0008422">
    <property type="term" value="F:beta-glucosidase activity"/>
    <property type="evidence" value="ECO:0007669"/>
    <property type="project" value="UniProtKB-EC"/>
</dbReference>
<dbReference type="GO" id="GO:0030245">
    <property type="term" value="P:cellulose catabolic process"/>
    <property type="evidence" value="ECO:0007669"/>
    <property type="project" value="UniProtKB-UniPathway"/>
</dbReference>
<dbReference type="FunFam" id="2.60.40.10:FF:001619">
    <property type="entry name" value="Beta-glucosidase"/>
    <property type="match status" value="1"/>
</dbReference>
<dbReference type="FunFam" id="3.20.20.300:FF:000002">
    <property type="entry name" value="Probable beta-glucosidase"/>
    <property type="match status" value="1"/>
</dbReference>
<dbReference type="FunFam" id="3.40.50.1700:FF:000003">
    <property type="entry name" value="Probable beta-glucosidase"/>
    <property type="match status" value="1"/>
</dbReference>
<dbReference type="Gene3D" id="3.40.50.1700">
    <property type="entry name" value="Glycoside hydrolase family 3 C-terminal domain"/>
    <property type="match status" value="1"/>
</dbReference>
<dbReference type="Gene3D" id="3.20.20.300">
    <property type="entry name" value="Glycoside hydrolase, family 3, N-terminal domain"/>
    <property type="match status" value="1"/>
</dbReference>
<dbReference type="Gene3D" id="2.60.40.10">
    <property type="entry name" value="Immunoglobulins"/>
    <property type="match status" value="1"/>
</dbReference>
<dbReference type="InterPro" id="IPR050288">
    <property type="entry name" value="Cellulose_deg_GH3"/>
</dbReference>
<dbReference type="InterPro" id="IPR026891">
    <property type="entry name" value="Fn3-like"/>
</dbReference>
<dbReference type="InterPro" id="IPR019800">
    <property type="entry name" value="Glyco_hydro_3_AS"/>
</dbReference>
<dbReference type="InterPro" id="IPR002772">
    <property type="entry name" value="Glyco_hydro_3_C"/>
</dbReference>
<dbReference type="InterPro" id="IPR036881">
    <property type="entry name" value="Glyco_hydro_3_C_sf"/>
</dbReference>
<dbReference type="InterPro" id="IPR001764">
    <property type="entry name" value="Glyco_hydro_3_N"/>
</dbReference>
<dbReference type="InterPro" id="IPR036962">
    <property type="entry name" value="Glyco_hydro_3_N_sf"/>
</dbReference>
<dbReference type="InterPro" id="IPR017853">
    <property type="entry name" value="Glycoside_hydrolase_SF"/>
</dbReference>
<dbReference type="InterPro" id="IPR013783">
    <property type="entry name" value="Ig-like_fold"/>
</dbReference>
<dbReference type="PANTHER" id="PTHR42715">
    <property type="entry name" value="BETA-GLUCOSIDASE"/>
    <property type="match status" value="1"/>
</dbReference>
<dbReference type="PANTHER" id="PTHR42715:SF2">
    <property type="entry name" value="BETA-GLUCOSIDASE F-RELATED"/>
    <property type="match status" value="1"/>
</dbReference>
<dbReference type="Pfam" id="PF14310">
    <property type="entry name" value="Fn3-like"/>
    <property type="match status" value="1"/>
</dbReference>
<dbReference type="Pfam" id="PF00933">
    <property type="entry name" value="Glyco_hydro_3"/>
    <property type="match status" value="1"/>
</dbReference>
<dbReference type="Pfam" id="PF01915">
    <property type="entry name" value="Glyco_hydro_3_C"/>
    <property type="match status" value="1"/>
</dbReference>
<dbReference type="PRINTS" id="PR00133">
    <property type="entry name" value="GLHYDRLASE3"/>
</dbReference>
<dbReference type="SMART" id="SM01217">
    <property type="entry name" value="Fn3_like"/>
    <property type="match status" value="1"/>
</dbReference>
<dbReference type="SUPFAM" id="SSF51445">
    <property type="entry name" value="(Trans)glycosidases"/>
    <property type="match status" value="1"/>
</dbReference>
<dbReference type="SUPFAM" id="SSF52279">
    <property type="entry name" value="Beta-D-glucan exohydrolase, C-terminal domain"/>
    <property type="match status" value="1"/>
</dbReference>
<dbReference type="PROSITE" id="PS00775">
    <property type="entry name" value="GLYCOSYL_HYDROL_F3"/>
    <property type="match status" value="1"/>
</dbReference>
<proteinExistence type="inferred from homology"/>
<gene>
    <name type="primary">bglF</name>
    <name type="ORF">NFIA_054350</name>
</gene>